<name>ANSME_KLEPN</name>
<protein>
    <recommendedName>
        <fullName evidence="11">Serine-type anaerobic sulfatase-maturating enzyme</fullName>
        <shortName evidence="10">Ser-type anaerobic sulfatase-maturating enzyme</shortName>
        <ecNumber evidence="5 6 12">1.1.98.7</ecNumber>
    </recommendedName>
    <alternativeName>
        <fullName evidence="10">Anaerobic sulfatase-maturating enzyme</fullName>
        <shortName evidence="10">AnSME</shortName>
    </alternativeName>
    <alternativeName>
        <fullName>Arylsulfatase-activating protein</fullName>
    </alternativeName>
    <alternativeName>
        <fullName evidence="9">Formylglycine-generating enzyme</fullName>
    </alternativeName>
</protein>
<keyword id="KW-0004">4Fe-4S</keyword>
<keyword id="KW-0963">Cytoplasm</keyword>
<keyword id="KW-0903">Direct protein sequencing</keyword>
<keyword id="KW-0408">Iron</keyword>
<keyword id="KW-0411">Iron-sulfur</keyword>
<keyword id="KW-0479">Metal-binding</keyword>
<keyword id="KW-0560">Oxidoreductase</keyword>
<keyword id="KW-0949">S-adenosyl-L-methionine</keyword>
<feature type="chain" id="PRO_0000134461" description="Serine-type anaerobic sulfatase-maturating enzyme">
    <location>
        <begin position="1"/>
        <end position="395"/>
    </location>
</feature>
<feature type="domain" description="Radical SAM core" evidence="2">
    <location>
        <begin position="18"/>
        <end position="249"/>
    </location>
</feature>
<feature type="active site" description="Proton acceptor" evidence="1">
    <location>
        <position position="292"/>
    </location>
</feature>
<feature type="binding site" evidence="2 13">
    <location>
        <position position="35"/>
    </location>
    <ligand>
        <name>[4Fe-4S] cluster</name>
        <dbReference type="ChEBI" id="CHEBI:49883"/>
        <label>1</label>
        <note>4Fe-4S-S-AdoMet</note>
    </ligand>
</feature>
<feature type="binding site" evidence="2 13">
    <location>
        <position position="39"/>
    </location>
    <ligand>
        <name>[4Fe-4S] cluster</name>
        <dbReference type="ChEBI" id="CHEBI:49883"/>
        <label>1</label>
        <note>4Fe-4S-S-AdoMet</note>
    </ligand>
</feature>
<feature type="binding site" evidence="1">
    <location>
        <position position="41"/>
    </location>
    <ligand>
        <name>S-adenosyl-L-methionine</name>
        <dbReference type="ChEBI" id="CHEBI:59789"/>
    </ligand>
</feature>
<feature type="binding site" evidence="2 13">
    <location>
        <position position="42"/>
    </location>
    <ligand>
        <name>[4Fe-4S] cluster</name>
        <dbReference type="ChEBI" id="CHEBI:49883"/>
        <label>1</label>
        <note>4Fe-4S-S-AdoMet</note>
    </ligand>
</feature>
<feature type="binding site" evidence="1">
    <location>
        <position position="84"/>
    </location>
    <ligand>
        <name>S-adenosyl-L-methionine</name>
        <dbReference type="ChEBI" id="CHEBI:59789"/>
    </ligand>
</feature>
<feature type="binding site" evidence="1">
    <location>
        <position position="152"/>
    </location>
    <ligand>
        <name>S-adenosyl-L-methionine</name>
        <dbReference type="ChEBI" id="CHEBI:59789"/>
    </ligand>
</feature>
<feature type="binding site" evidence="1">
    <location>
        <position position="270"/>
    </location>
    <ligand>
        <name>[4Fe-4S] cluster</name>
        <dbReference type="ChEBI" id="CHEBI:49883"/>
        <label>2</label>
    </ligand>
</feature>
<feature type="binding site" evidence="1">
    <location>
        <position position="276"/>
    </location>
    <ligand>
        <name>[4Fe-4S] cluster</name>
        <dbReference type="ChEBI" id="CHEBI:49883"/>
        <label>2</label>
    </ligand>
</feature>
<feature type="binding site" evidence="1">
    <location>
        <position position="291"/>
    </location>
    <ligand>
        <name>[4Fe-4S] cluster</name>
        <dbReference type="ChEBI" id="CHEBI:49883"/>
        <label>2</label>
    </ligand>
</feature>
<feature type="binding site" evidence="1">
    <location>
        <position position="331"/>
    </location>
    <ligand>
        <name>[4Fe-4S] cluster</name>
        <dbReference type="ChEBI" id="CHEBI:49883"/>
        <label>3</label>
    </ligand>
</feature>
<feature type="binding site" evidence="1">
    <location>
        <position position="334"/>
    </location>
    <ligand>
        <name>[4Fe-4S] cluster</name>
        <dbReference type="ChEBI" id="CHEBI:49883"/>
        <label>3</label>
    </ligand>
</feature>
<feature type="binding site" evidence="1">
    <location>
        <position position="340"/>
    </location>
    <ligand>
        <name>[4Fe-4S] cluster</name>
        <dbReference type="ChEBI" id="CHEBI:49883"/>
        <label>3</label>
    </ligand>
</feature>
<feature type="binding site" evidence="1">
    <location>
        <position position="344"/>
    </location>
    <ligand>
        <name>[4Fe-4S] cluster</name>
        <dbReference type="ChEBI" id="CHEBI:49883"/>
        <label>2</label>
    </ligand>
</feature>
<feature type="binding site" evidence="1">
    <location>
        <position position="357"/>
    </location>
    <ligand>
        <name>[4Fe-4S] cluster</name>
        <dbReference type="ChEBI" id="CHEBI:49883"/>
        <label>3</label>
    </ligand>
</feature>
<feature type="sequence variant" description="In strain: Isolate 13.">
    <original>F</original>
    <variation>L</variation>
    <location>
        <position position="24"/>
    </location>
</feature>
<feature type="sequence variant" description="In strain: Isolate 13 and Isolate N2.">
    <original>G</original>
    <variation>S</variation>
    <location>
        <position position="140"/>
    </location>
</feature>
<feature type="sequence variant" description="In strain: Isolate 13 and Isolate N2.">
    <original>D</original>
    <variation>G</variation>
    <location>
        <position position="177"/>
    </location>
</feature>
<feature type="sequence variant" description="In strain: Isolate 13 and Isolate N2.">
    <original>V</original>
    <variation>D</variation>
    <location>
        <position position="197"/>
    </location>
</feature>
<feature type="sequence variant" description="In strain: Isolate 13 and Isolate N2.">
    <original>S</original>
    <variation>P</variation>
    <location>
        <position position="284"/>
    </location>
</feature>
<feature type="sequence variant" description="In strain: Isolate 13 and Isolate N2.">
    <original>T</original>
    <variation>A</variation>
    <location>
        <position position="297"/>
    </location>
</feature>
<feature type="sequence variant" description="In strain: Isolate 13.">
    <original>T</original>
    <variation>A</variation>
    <location>
        <position position="333"/>
    </location>
</feature>
<feature type="mutagenesis site" description="Unable to incorporate a third 4Fe-4S cluster; when associated with A-39 and A-42." evidence="6">
    <original>C</original>
    <variation>A</variation>
    <location>
        <position position="35"/>
    </location>
</feature>
<feature type="mutagenesis site" description="Unable to activate AtsA. No FGly detectable. Binds AtsA with reduced efficiency. Unable to incorporate a third 4Fe-4S cluster; when associated with A-35 and A-42." evidence="5 6">
    <original>C</original>
    <variation>A</variation>
    <location>
        <position position="39"/>
    </location>
</feature>
<feature type="mutagenesis site" description="Unable to activate AtsA. No FGly detectable. Binds AtsA with reduced efficiency. Unable to incorporate a third 4Fe-4S cluster; when associated with A-35 and A-39." evidence="5 6">
    <original>C</original>
    <variation>A</variation>
    <location>
        <position position="42"/>
    </location>
</feature>
<feature type="mutagenesis site" description="Drastic reduction in AtsA activity. Abolition of binding to AtsA. No binding to SAM." evidence="5">
    <original>G</original>
    <variation>A</variation>
    <location>
        <position position="83"/>
    </location>
</feature>
<feature type="mutagenesis site" description="Drastic reduction in AtsA activity. Abolition of binding to AtsA. No binding to SAM." evidence="5">
    <original>G</original>
    <variation>A</variation>
    <location>
        <position position="84"/>
    </location>
</feature>
<feature type="mutagenesis site" description="Drastic reduction in AtsA activity. Abolition of binding to AtsA. No binding to SAM." evidence="5">
    <original>E</original>
    <variation>A</variation>
    <location>
        <position position="85"/>
    </location>
</feature>
<feature type="mutagenesis site" description="Binding to AtsA reduced to 60%. No binding to SAM. Still catalytically active." evidence="5">
    <original>P</original>
    <variation>G</variation>
    <location>
        <position position="86"/>
    </location>
</feature>
<feature type="mutagenesis site" description="No change in AtsA activity." evidence="5">
    <original>L</original>
    <variation>A</variation>
    <location>
        <position position="87"/>
    </location>
</feature>
<feature type="mutagenesis site" description="No change in AtsA activity." evidence="5">
    <original>L</original>
    <variation>A</variation>
    <location>
        <position position="88"/>
    </location>
</feature>
<feature type="mutagenesis site" description="No change in activity." evidence="7">
    <original>C</original>
    <variation>A</variation>
    <location>
        <position position="127"/>
    </location>
</feature>
<feature type="mutagenesis site" description="No change in activity." evidence="7">
    <original>C</original>
    <variation>A</variation>
    <location>
        <position position="245"/>
    </location>
</feature>
<feature type="mutagenesis site" description="Unable to activate AtsA. No FGly detectable. No binding to AtsA." evidence="5">
    <original>C</original>
    <variation>A</variation>
    <location>
        <position position="270"/>
    </location>
</feature>
<feature type="mutagenesis site" description="Exhibits reduced solubility and drastically reduced activity." evidence="7">
    <original>C</original>
    <variation>A</variation>
    <location>
        <position position="291"/>
    </location>
</feature>
<feature type="mutagenesis site" description="Unable to activate AtsA. No FGly detectable. No binding to AtsA." evidence="5">
    <original>C</original>
    <variation>A</variation>
    <location>
        <position position="331"/>
    </location>
</feature>
<feature type="mutagenesis site" description="Unable to activate AtsA. No FGly detectable. No binding to AtsA." evidence="5">
    <original>C</original>
    <variation>A</variation>
    <location>
        <position position="334"/>
    </location>
</feature>
<organism>
    <name type="scientific">Klebsiella pneumoniae</name>
    <dbReference type="NCBI Taxonomy" id="573"/>
    <lineage>
        <taxon>Bacteria</taxon>
        <taxon>Pseudomonadati</taxon>
        <taxon>Pseudomonadota</taxon>
        <taxon>Gammaproteobacteria</taxon>
        <taxon>Enterobacterales</taxon>
        <taxon>Enterobacteriaceae</taxon>
        <taxon>Klebsiella/Raoultella group</taxon>
        <taxon>Klebsiella</taxon>
        <taxon>Klebsiella pneumoniae complex</taxon>
    </lineage>
</organism>
<reference key="1">
    <citation type="journal article" date="1999" name="J. Biol. Chem.">
        <title>The iron sulfur protein AtsB is required for posttranslational formation of formylglycine in the Klebsiella sulfatase.</title>
        <authorList>
            <person name="Szameit C."/>
            <person name="Miech C."/>
            <person name="Balleininger M."/>
            <person name="Schmidt B."/>
            <person name="von Figura K."/>
            <person name="Dierks T."/>
        </authorList>
    </citation>
    <scope>NUCLEOTIDE SEQUENCE [GENOMIC DNA]</scope>
    <scope>FUNCTION</scope>
    <scope>CATALYTIC ACTIVITY</scope>
    <source>
        <strain>ATCC 10031 / DSM 681 / NBRC 3512 / NCIMB 9111 / NCTC 7427</strain>
    </source>
</reference>
<reference key="2">
    <citation type="submission" date="2000-05" db="EMBL/GenBank/DDBJ databases">
        <authorList>
            <person name="Coulter-Mackie M.B."/>
            <person name="Senz J."/>
            <person name="Siu H."/>
        </authorList>
    </citation>
    <scope>NUCLEOTIDE SEQUENCE [GENOMIC DNA]</scope>
    <source>
        <strain>Isolate 13</strain>
        <strain>Isolate N2</strain>
    </source>
</reference>
<reference key="3">
    <citation type="journal article" date="2003" name="J. Biol. Chem.">
        <title>Posttranslational modification of serine to formylglycine in bacterial sulfatases. Recognition of the modification motif by the iron-sulfur protein AtsB.</title>
        <authorList>
            <person name="Marquordt C."/>
            <person name="Fang Q."/>
            <person name="Will E."/>
            <person name="Peng J."/>
            <person name="von Figura K."/>
            <person name="Dierks T."/>
        </authorList>
    </citation>
    <scope>PROTEIN SEQUENCE OF 1-8</scope>
    <scope>FUNCTION</scope>
    <scope>SUBCELLULAR LOCATION</scope>
    <scope>INTERACTION WITH ATSA</scope>
</reference>
<reference key="4">
    <citation type="journal article" date="2004" name="J. Biol. Chem.">
        <title>Post-translational formylglycine modification of bacterial sulfatases by the radical S-adenosylmethionine protein AtsB.</title>
        <authorList>
            <person name="Fang Q."/>
            <person name="Peng J."/>
            <person name="Dierks T."/>
        </authorList>
    </citation>
    <scope>FUNCTION</scope>
    <scope>CATALYTIC ACTIVITY</scope>
    <scope>IDENTIFICATION AS A SAM-BINDING PROTEIN</scope>
    <scope>ACTIVITY REGULATION</scope>
    <scope>MUTAGENESIS OF CYS-39; CYS-42; GLY-83; GLY-84; GLU-85; PRO-86; LEU-87; LEU-88; CYS-270; CYS-331 AND CYS-334</scope>
</reference>
<reference key="5">
    <citation type="journal article" date="2008" name="Biochemistry">
        <title>In vitro characterization of AtsB, a radical SAM formylglycine-generating enzyme that contains three [4Fe-4S] clusters.</title>
        <authorList>
            <person name="Grove T.L."/>
            <person name="Lee K.H."/>
            <person name="St Clair J."/>
            <person name="Krebs C."/>
            <person name="Booker S.J."/>
        </authorList>
    </citation>
    <scope>FUNCTION</scope>
    <scope>CATALYTIC ACTIVITY</scope>
    <scope>COFACTOR</scope>
    <scope>MUTAGENESIS OF CYS-35; CYS-39 AND CYS-42</scope>
</reference>
<reference key="6">
    <citation type="journal article" date="2013" name="Biochemistry">
        <title>Further characterization of Cys-type and Ser-type anaerobic sulfatase maturating enzymes suggests a commonality in the mechanism of catalysis.</title>
        <authorList>
            <person name="Grove T.L."/>
            <person name="Ahlum J.H."/>
            <person name="Qin R.M."/>
            <person name="Lanz N.D."/>
            <person name="Radle M.I."/>
            <person name="Krebs C."/>
            <person name="Booker S.J."/>
        </authorList>
    </citation>
    <scope>COFACTOR</scope>
    <scope>SUBUNIT</scope>
    <scope>MUTAGENESIS OF CYS-127; CYS-245 AND CYS-291</scope>
</reference>
<comment type="function">
    <text evidence="3 4 5 6">Involved in 'Ser-type' sulfatase maturation under anaerobic conditions. Catalyzes the post-translational modification of serine ('Ser-72' in the arylsulfatase AtsA) into 3-oxoalanine (also known as C(alpha)-formylglycine (FGly)), by a free radical chemical mechanism initiated via the reductive cleavage of S-adenosyl-L-methionine (SAM) (PubMed:10336424, PubMed:12419807, PubMed:14749327, PubMed:18558715). Is capable of catalyzing multiple turnovers (PubMed:18558715). In vitro, use of a peptide substrate in which the target serine is changed to cysteine also gives rise to turnover, supporting approximately 4-fold the activity of that observed with the natural substrate (PubMed:18558715).</text>
</comment>
<comment type="catalytic activity">
    <reaction evidence="5 6 12">
        <text>L-seryl-[sulfatase] + S-adenosyl-L-methionine = 3-oxo-L-alanyl-[sulfatase] + 5'-deoxyadenosine + L-methionine + H(+)</text>
        <dbReference type="Rhea" id="RHEA:17609"/>
        <dbReference type="Rhea" id="RHEA-COMP:12901"/>
        <dbReference type="Rhea" id="RHEA-COMP:15882"/>
        <dbReference type="ChEBI" id="CHEBI:15378"/>
        <dbReference type="ChEBI" id="CHEBI:17319"/>
        <dbReference type="ChEBI" id="CHEBI:29999"/>
        <dbReference type="ChEBI" id="CHEBI:57844"/>
        <dbReference type="ChEBI" id="CHEBI:59789"/>
        <dbReference type="ChEBI" id="CHEBI:85621"/>
        <dbReference type="EC" id="1.1.98.7"/>
    </reaction>
</comment>
<comment type="cofactor">
    <cofactor evidence="2 6 7">
        <name>[4Fe-4S] cluster</name>
        <dbReference type="ChEBI" id="CHEBI:49883"/>
    </cofactor>
    <text evidence="1 6">Binds 3 [4Fe-4S] clusters (PubMed:18558715). The first cluster is coordinated with 3 cysteines and an exchangeable S-adenosyl-L-methionine (By similarity).</text>
</comment>
<comment type="activity regulation">
    <text evidence="5">Activity is inhibited by iron chelators.</text>
</comment>
<comment type="pathway">
    <text evidence="11">Protein modification; sulfatase oxidation.</text>
</comment>
<comment type="subunit">
    <text evidence="4 5 7">Monomer (PubMed:23477283). Interacts with AtsA prior to its export to the periplasm (PubMed:12419807). This interaction depends on the presence of AtsA 'Ser-72' (PubMed:12419807). Binding of SAM to AtsB promotes the formation of a ternary AtsA-AtsB-SAM complex (PubMed:14749327).</text>
</comment>
<comment type="subcellular location">
    <subcellularLocation>
        <location evidence="4">Cytoplasm</location>
    </subcellularLocation>
</comment>
<comment type="similarity">
    <text evidence="11">Belongs to the radical SAM superfamily. Anaerobic sulfatase-maturating enzyme family.</text>
</comment>
<dbReference type="EC" id="1.1.98.7" evidence="5 6 12"/>
<dbReference type="EMBL" id="AJ131525">
    <property type="protein sequence ID" value="CAB40960.1"/>
    <property type="molecule type" value="Genomic_DNA"/>
</dbReference>
<dbReference type="EMBL" id="AF262989">
    <property type="protein sequence ID" value="AAF71374.1"/>
    <property type="molecule type" value="Genomic_DNA"/>
</dbReference>
<dbReference type="EMBL" id="AF262990">
    <property type="protein sequence ID" value="AAF71376.1"/>
    <property type="molecule type" value="Genomic_DNA"/>
</dbReference>
<dbReference type="PIR" id="T45547">
    <property type="entry name" value="T45547"/>
</dbReference>
<dbReference type="RefSeq" id="WP_023300804.1">
    <property type="nucleotide sequence ID" value="NZ_VKNK01000023.1"/>
</dbReference>
<dbReference type="SMR" id="Q9X758"/>
<dbReference type="BRENDA" id="1.1.98.7">
    <property type="organism ID" value="2814"/>
</dbReference>
<dbReference type="BRENDA" id="1.8.98.7">
    <property type="organism ID" value="2814"/>
</dbReference>
<dbReference type="UniPathway" id="UPA00910"/>
<dbReference type="GO" id="GO:0005737">
    <property type="term" value="C:cytoplasm"/>
    <property type="evidence" value="ECO:0007669"/>
    <property type="project" value="UniProtKB-SubCell"/>
</dbReference>
<dbReference type="GO" id="GO:0051539">
    <property type="term" value="F:4 iron, 4 sulfur cluster binding"/>
    <property type="evidence" value="ECO:0007669"/>
    <property type="project" value="UniProtKB-KW"/>
</dbReference>
<dbReference type="GO" id="GO:0046872">
    <property type="term" value="F:metal ion binding"/>
    <property type="evidence" value="ECO:0007669"/>
    <property type="project" value="UniProtKB-KW"/>
</dbReference>
<dbReference type="GO" id="GO:0016491">
    <property type="term" value="F:oxidoreductase activity"/>
    <property type="evidence" value="ECO:0007669"/>
    <property type="project" value="UniProtKB-KW"/>
</dbReference>
<dbReference type="CDD" id="cd01335">
    <property type="entry name" value="Radical_SAM"/>
    <property type="match status" value="1"/>
</dbReference>
<dbReference type="CDD" id="cd21120">
    <property type="entry name" value="SPASM_anSME"/>
    <property type="match status" value="1"/>
</dbReference>
<dbReference type="Gene3D" id="3.20.20.70">
    <property type="entry name" value="Aldolase class I"/>
    <property type="match status" value="1"/>
</dbReference>
<dbReference type="InterPro" id="IPR023885">
    <property type="entry name" value="4Fe4S-binding_SPASM_dom"/>
</dbReference>
<dbReference type="InterPro" id="IPR013785">
    <property type="entry name" value="Aldolase_TIM"/>
</dbReference>
<dbReference type="InterPro" id="IPR007197">
    <property type="entry name" value="rSAM"/>
</dbReference>
<dbReference type="InterPro" id="IPR047207">
    <property type="entry name" value="SPASM_anSME"/>
</dbReference>
<dbReference type="InterPro" id="IPR023867">
    <property type="entry name" value="Sulphatase_maturase_rSAM"/>
</dbReference>
<dbReference type="NCBIfam" id="TIGR04085">
    <property type="entry name" value="rSAM_more_4Fe4S"/>
    <property type="match status" value="1"/>
</dbReference>
<dbReference type="NCBIfam" id="TIGR03942">
    <property type="entry name" value="sulfatase_rSAM"/>
    <property type="match status" value="1"/>
</dbReference>
<dbReference type="PANTHER" id="PTHR43273">
    <property type="entry name" value="ANAEROBIC SULFATASE-MATURATING ENZYME HOMOLOG ASLB-RELATED"/>
    <property type="match status" value="1"/>
</dbReference>
<dbReference type="PANTHER" id="PTHR43273:SF3">
    <property type="entry name" value="ANAEROBIC SULFATASE-MATURATING ENZYME HOMOLOG ASLB-RELATED"/>
    <property type="match status" value="1"/>
</dbReference>
<dbReference type="Pfam" id="PF04055">
    <property type="entry name" value="Radical_SAM"/>
    <property type="match status" value="1"/>
</dbReference>
<dbReference type="SFLD" id="SFLDG01072">
    <property type="entry name" value="dehydrogenase_like"/>
    <property type="match status" value="1"/>
</dbReference>
<dbReference type="SFLD" id="SFLDS00029">
    <property type="entry name" value="Radical_SAM"/>
    <property type="match status" value="1"/>
</dbReference>
<dbReference type="SUPFAM" id="SSF102114">
    <property type="entry name" value="Radical SAM enzymes"/>
    <property type="match status" value="1"/>
</dbReference>
<dbReference type="PROSITE" id="PS51918">
    <property type="entry name" value="RADICAL_SAM"/>
    <property type="match status" value="1"/>
</dbReference>
<gene>
    <name evidence="8" type="primary">atsB</name>
</gene>
<proteinExistence type="evidence at protein level"/>
<sequence length="395" mass="44237">MLNIAALRQQQIPLAAEPRSPVPFHILMKPIGPACNLACRYCYYPQDETPVNKMDDARLEQFIRRYIAAQPAGAREINFVWQGGEPLLAGLSFYKKALALQARYAPDGVTISNSLQTNGTLINDAWCRLFREHGFIIGLGLEGNEALQDYHRPDKRGRSTWSAALRGIDLLHQHQVDFNLLVVVHNEMAAHAAAIYVRLVSLGARYLQFQPLMSEGAALREGYQLSADNWGRFMVGIWRQWRKRCDRGRVFVINIEQAWAQYFTHTSGSCVHSARCGSNLVMESDGQLYACDHLINTEHRLGRLDEQTLAAAVDASVQLPFGQQKSLRRECQTCSVKMVCQGGCPAHLNAAGNNRLCGGYYRFFSDILAPLRPFSRDLNGLKAWRAAFVGTAHTA</sequence>
<evidence type="ECO:0000250" key="1">
    <source>
        <dbReference type="UniProtKB" id="Q0TTH1"/>
    </source>
</evidence>
<evidence type="ECO:0000255" key="2">
    <source>
        <dbReference type="PROSITE-ProRule" id="PRU01266"/>
    </source>
</evidence>
<evidence type="ECO:0000269" key="3">
    <source>
    </source>
</evidence>
<evidence type="ECO:0000269" key="4">
    <source>
    </source>
</evidence>
<evidence type="ECO:0000269" key="5">
    <source>
    </source>
</evidence>
<evidence type="ECO:0000269" key="6">
    <source>
    </source>
</evidence>
<evidence type="ECO:0000269" key="7">
    <source>
    </source>
</evidence>
<evidence type="ECO:0000303" key="8">
    <source>
    </source>
</evidence>
<evidence type="ECO:0000303" key="9">
    <source>
    </source>
</evidence>
<evidence type="ECO:0000303" key="10">
    <source>
    </source>
</evidence>
<evidence type="ECO:0000305" key="11"/>
<evidence type="ECO:0000305" key="12">
    <source>
    </source>
</evidence>
<evidence type="ECO:0000305" key="13">
    <source>
    </source>
</evidence>
<accession>Q9X758</accession>
<accession>Q9L4Y3</accession>
<accession>Q9L4Y5</accession>